<feature type="chain" id="PRO_1000011628" description="GTPase Der">
    <location>
        <begin position="1"/>
        <end position="465"/>
    </location>
</feature>
<feature type="domain" description="EngA-type G 1">
    <location>
        <begin position="3"/>
        <end position="166"/>
    </location>
</feature>
<feature type="domain" description="EngA-type G 2">
    <location>
        <begin position="184"/>
        <end position="358"/>
    </location>
</feature>
<feature type="domain" description="KH-like" evidence="1">
    <location>
        <begin position="359"/>
        <end position="443"/>
    </location>
</feature>
<feature type="region of interest" description="Disordered" evidence="2">
    <location>
        <begin position="446"/>
        <end position="465"/>
    </location>
</feature>
<feature type="binding site" evidence="1">
    <location>
        <begin position="9"/>
        <end position="16"/>
    </location>
    <ligand>
        <name>GTP</name>
        <dbReference type="ChEBI" id="CHEBI:37565"/>
        <label>1</label>
    </ligand>
</feature>
<feature type="binding site" evidence="1">
    <location>
        <begin position="56"/>
        <end position="60"/>
    </location>
    <ligand>
        <name>GTP</name>
        <dbReference type="ChEBI" id="CHEBI:37565"/>
        <label>1</label>
    </ligand>
</feature>
<feature type="binding site" evidence="1">
    <location>
        <begin position="118"/>
        <end position="121"/>
    </location>
    <ligand>
        <name>GTP</name>
        <dbReference type="ChEBI" id="CHEBI:37565"/>
        <label>1</label>
    </ligand>
</feature>
<feature type="binding site" evidence="1">
    <location>
        <begin position="190"/>
        <end position="197"/>
    </location>
    <ligand>
        <name>GTP</name>
        <dbReference type="ChEBI" id="CHEBI:37565"/>
        <label>2</label>
    </ligand>
</feature>
<feature type="binding site" evidence="1">
    <location>
        <begin position="237"/>
        <end position="241"/>
    </location>
    <ligand>
        <name>GTP</name>
        <dbReference type="ChEBI" id="CHEBI:37565"/>
        <label>2</label>
    </ligand>
</feature>
<feature type="binding site" evidence="1">
    <location>
        <begin position="302"/>
        <end position="305"/>
    </location>
    <ligand>
        <name>GTP</name>
        <dbReference type="ChEBI" id="CHEBI:37565"/>
        <label>2</label>
    </ligand>
</feature>
<protein>
    <recommendedName>
        <fullName evidence="1">GTPase Der</fullName>
    </recommendedName>
    <alternativeName>
        <fullName evidence="1">GTP-binding protein EngA</fullName>
    </alternativeName>
</protein>
<comment type="function">
    <text evidence="1">GTPase that plays an essential role in the late steps of ribosome biogenesis.</text>
</comment>
<comment type="subunit">
    <text evidence="1">Associates with the 50S ribosomal subunit.</text>
</comment>
<comment type="similarity">
    <text evidence="1">Belongs to the TRAFAC class TrmE-Era-EngA-EngB-Septin-like GTPase superfamily. EngA (Der) GTPase family.</text>
</comment>
<name>DER_FRATT</name>
<accession>Q5NFD2</accession>
<gene>
    <name evidence="1" type="primary">der</name>
    <name type="synonym">engA</name>
    <name type="ordered locus">FTT_1306c</name>
</gene>
<dbReference type="EMBL" id="AJ749949">
    <property type="protein sequence ID" value="CAG45939.1"/>
    <property type="molecule type" value="Genomic_DNA"/>
</dbReference>
<dbReference type="RefSeq" id="WP_003022025.1">
    <property type="nucleotide sequence ID" value="NC_006570.2"/>
</dbReference>
<dbReference type="RefSeq" id="YP_170260.1">
    <property type="nucleotide sequence ID" value="NC_006570.2"/>
</dbReference>
<dbReference type="SMR" id="Q5NFD2"/>
<dbReference type="IntAct" id="Q5NFD2">
    <property type="interactions" value="3"/>
</dbReference>
<dbReference type="STRING" id="177416.FTT_1306c"/>
<dbReference type="DNASU" id="3191567"/>
<dbReference type="EnsemblBacteria" id="CAG45939">
    <property type="protein sequence ID" value="CAG45939"/>
    <property type="gene ID" value="FTT_1306c"/>
</dbReference>
<dbReference type="KEGG" id="ftu:FTT_1306c"/>
<dbReference type="eggNOG" id="COG1160">
    <property type="taxonomic scope" value="Bacteria"/>
</dbReference>
<dbReference type="OrthoDB" id="9805918at2"/>
<dbReference type="Proteomes" id="UP000001174">
    <property type="component" value="Chromosome"/>
</dbReference>
<dbReference type="GO" id="GO:0005525">
    <property type="term" value="F:GTP binding"/>
    <property type="evidence" value="ECO:0007669"/>
    <property type="project" value="UniProtKB-UniRule"/>
</dbReference>
<dbReference type="GO" id="GO:0043022">
    <property type="term" value="F:ribosome binding"/>
    <property type="evidence" value="ECO:0007669"/>
    <property type="project" value="TreeGrafter"/>
</dbReference>
<dbReference type="GO" id="GO:0042254">
    <property type="term" value="P:ribosome biogenesis"/>
    <property type="evidence" value="ECO:0007669"/>
    <property type="project" value="UniProtKB-KW"/>
</dbReference>
<dbReference type="CDD" id="cd01894">
    <property type="entry name" value="EngA1"/>
    <property type="match status" value="1"/>
</dbReference>
<dbReference type="CDD" id="cd01895">
    <property type="entry name" value="EngA2"/>
    <property type="match status" value="1"/>
</dbReference>
<dbReference type="FunFam" id="3.30.300.20:FF:000004">
    <property type="entry name" value="GTPase Der"/>
    <property type="match status" value="1"/>
</dbReference>
<dbReference type="FunFam" id="3.40.50.300:FF:000040">
    <property type="entry name" value="GTPase Der"/>
    <property type="match status" value="1"/>
</dbReference>
<dbReference type="FunFam" id="3.40.50.300:FF:000057">
    <property type="entry name" value="GTPase Der"/>
    <property type="match status" value="1"/>
</dbReference>
<dbReference type="Gene3D" id="3.30.300.20">
    <property type="match status" value="1"/>
</dbReference>
<dbReference type="Gene3D" id="3.40.50.300">
    <property type="entry name" value="P-loop containing nucleotide triphosphate hydrolases"/>
    <property type="match status" value="2"/>
</dbReference>
<dbReference type="HAMAP" id="MF_00195">
    <property type="entry name" value="GTPase_Der"/>
    <property type="match status" value="1"/>
</dbReference>
<dbReference type="InterPro" id="IPR031166">
    <property type="entry name" value="G_ENGA"/>
</dbReference>
<dbReference type="InterPro" id="IPR006073">
    <property type="entry name" value="GTP-bd"/>
</dbReference>
<dbReference type="InterPro" id="IPR016484">
    <property type="entry name" value="GTPase_Der"/>
</dbReference>
<dbReference type="InterPro" id="IPR032859">
    <property type="entry name" value="KH_dom-like"/>
</dbReference>
<dbReference type="InterPro" id="IPR015946">
    <property type="entry name" value="KH_dom-like_a/b"/>
</dbReference>
<dbReference type="InterPro" id="IPR027417">
    <property type="entry name" value="P-loop_NTPase"/>
</dbReference>
<dbReference type="InterPro" id="IPR005225">
    <property type="entry name" value="Small_GTP-bd"/>
</dbReference>
<dbReference type="NCBIfam" id="TIGR03594">
    <property type="entry name" value="GTPase_EngA"/>
    <property type="match status" value="1"/>
</dbReference>
<dbReference type="NCBIfam" id="TIGR00231">
    <property type="entry name" value="small_GTP"/>
    <property type="match status" value="2"/>
</dbReference>
<dbReference type="PANTHER" id="PTHR43834">
    <property type="entry name" value="GTPASE DER"/>
    <property type="match status" value="1"/>
</dbReference>
<dbReference type="PANTHER" id="PTHR43834:SF6">
    <property type="entry name" value="GTPASE DER"/>
    <property type="match status" value="1"/>
</dbReference>
<dbReference type="Pfam" id="PF14714">
    <property type="entry name" value="KH_dom-like"/>
    <property type="match status" value="1"/>
</dbReference>
<dbReference type="Pfam" id="PF01926">
    <property type="entry name" value="MMR_HSR1"/>
    <property type="match status" value="2"/>
</dbReference>
<dbReference type="PIRSF" id="PIRSF006485">
    <property type="entry name" value="GTP-binding_EngA"/>
    <property type="match status" value="1"/>
</dbReference>
<dbReference type="PRINTS" id="PR00326">
    <property type="entry name" value="GTP1OBG"/>
</dbReference>
<dbReference type="SUPFAM" id="SSF52540">
    <property type="entry name" value="P-loop containing nucleoside triphosphate hydrolases"/>
    <property type="match status" value="2"/>
</dbReference>
<dbReference type="PROSITE" id="PS51712">
    <property type="entry name" value="G_ENGA"/>
    <property type="match status" value="2"/>
</dbReference>
<evidence type="ECO:0000255" key="1">
    <source>
        <dbReference type="HAMAP-Rule" id="MF_00195"/>
    </source>
</evidence>
<evidence type="ECO:0000256" key="2">
    <source>
        <dbReference type="SAM" id="MobiDB-lite"/>
    </source>
</evidence>
<organism>
    <name type="scientific">Francisella tularensis subsp. tularensis (strain SCHU S4 / Schu 4)</name>
    <dbReference type="NCBI Taxonomy" id="177416"/>
    <lineage>
        <taxon>Bacteria</taxon>
        <taxon>Pseudomonadati</taxon>
        <taxon>Pseudomonadota</taxon>
        <taxon>Gammaproteobacteria</taxon>
        <taxon>Thiotrichales</taxon>
        <taxon>Francisellaceae</taxon>
        <taxon>Francisella</taxon>
    </lineage>
</organism>
<reference key="1">
    <citation type="journal article" date="2005" name="Nat. Genet.">
        <title>The complete genome sequence of Francisella tularensis, the causative agent of tularemia.</title>
        <authorList>
            <person name="Larsson P."/>
            <person name="Oyston P.C.F."/>
            <person name="Chain P."/>
            <person name="Chu M.C."/>
            <person name="Duffield M."/>
            <person name="Fuxelius H.-H."/>
            <person name="Garcia E."/>
            <person name="Haelltorp G."/>
            <person name="Johansson D."/>
            <person name="Isherwood K.E."/>
            <person name="Karp P.D."/>
            <person name="Larsson E."/>
            <person name="Liu Y."/>
            <person name="Michell S."/>
            <person name="Prior J."/>
            <person name="Prior R."/>
            <person name="Malfatti S."/>
            <person name="Sjoestedt A."/>
            <person name="Svensson K."/>
            <person name="Thompson N."/>
            <person name="Vergez L."/>
            <person name="Wagg J.K."/>
            <person name="Wren B.W."/>
            <person name="Lindler L.E."/>
            <person name="Andersson S.G.E."/>
            <person name="Forsman M."/>
            <person name="Titball R.W."/>
        </authorList>
    </citation>
    <scope>NUCLEOTIDE SEQUENCE [LARGE SCALE GENOMIC DNA]</scope>
    <source>
        <strain>SCHU S4 / Schu 4</strain>
    </source>
</reference>
<proteinExistence type="inferred from homology"/>
<keyword id="KW-0342">GTP-binding</keyword>
<keyword id="KW-0547">Nucleotide-binding</keyword>
<keyword id="KW-1185">Reference proteome</keyword>
<keyword id="KW-0677">Repeat</keyword>
<keyword id="KW-0690">Ribosome biogenesis</keyword>
<sequence length="465" mass="52446">MSFLVAIVGRANVGKSTLFNVLTNSYDALVFDFEGVTRDRQYGQAKYDDLDYLVVDTGGISDKDVGFDEFMAKQSQIAIDEANLVFFVVDGRSGLTTGDEYVASLLRQKDKKVVVVVNKVDGTDEEAAMAEFYSFGFDKVFAISAAHRRNTQKLVDKFLKKTLNEYYQDYTQTQEHKEQQRHGIHFSLIGRPNVGKSTLTNRMLGEDRVVVFDMPGTTIDSVSIPFERHGQKYTIVDTAGVRKRGKVKQTLEKFSVIKTLQAIQDSNVVVAVVDARQGISDQDLSLIHFAIKNGRALVLAVNKWDGMTEEDRIQVKQDLKRKLFFLQDYVDIHFISALHGTNVGHVFESIDTAYACASKKITTADATRLMQLAVEAHSPPMVGKFRIKLKYAHVGGHNPPVIVIHGNQVSRLPNSYKRYLENFFREALDFRGTPIVFEFKQSENPFADRKNKRSKDEGSKSKKVK</sequence>